<name>Y3968_DICDI</name>
<comment type="subcellular location">
    <subcellularLocation>
        <location evidence="3">Membrane</location>
        <topology evidence="3">Single-pass type I membrane protein</topology>
    </subcellularLocation>
</comment>
<feature type="signal peptide" evidence="1">
    <location>
        <begin position="1"/>
        <end position="20"/>
    </location>
</feature>
<feature type="chain" id="PRO_0000352398" description="Uncharacterized transmembrane protein DDB_G0281039">
    <location>
        <begin position="21"/>
        <end position="375"/>
    </location>
</feature>
<feature type="topological domain" description="Extracellular" evidence="1">
    <location>
        <begin position="21"/>
        <end position="335"/>
    </location>
</feature>
<feature type="transmembrane region" description="Helical" evidence="1">
    <location>
        <begin position="336"/>
        <end position="356"/>
    </location>
</feature>
<feature type="topological domain" description="Cytoplasmic" evidence="1">
    <location>
        <begin position="357"/>
        <end position="375"/>
    </location>
</feature>
<feature type="region of interest" description="Disordered" evidence="2">
    <location>
        <begin position="30"/>
        <end position="74"/>
    </location>
</feature>
<feature type="region of interest" description="Disordered" evidence="2">
    <location>
        <begin position="113"/>
        <end position="253"/>
    </location>
</feature>
<feature type="compositionally biased region" description="Low complexity" evidence="2">
    <location>
        <begin position="30"/>
        <end position="42"/>
    </location>
</feature>
<feature type="compositionally biased region" description="Basic residues" evidence="2">
    <location>
        <begin position="43"/>
        <end position="53"/>
    </location>
</feature>
<feature type="compositionally biased region" description="Low complexity" evidence="2">
    <location>
        <begin position="54"/>
        <end position="74"/>
    </location>
</feature>
<feature type="compositionally biased region" description="Basic residues" evidence="2">
    <location>
        <begin position="120"/>
        <end position="151"/>
    </location>
</feature>
<feature type="compositionally biased region" description="Polar residues" evidence="2">
    <location>
        <begin position="168"/>
        <end position="180"/>
    </location>
</feature>
<feature type="compositionally biased region" description="Low complexity" evidence="2">
    <location>
        <begin position="181"/>
        <end position="220"/>
    </location>
</feature>
<evidence type="ECO:0000255" key="1"/>
<evidence type="ECO:0000256" key="2">
    <source>
        <dbReference type="SAM" id="MobiDB-lite"/>
    </source>
</evidence>
<evidence type="ECO:0000305" key="3"/>
<gene>
    <name type="ORF">DDB_G0281039</name>
</gene>
<keyword id="KW-0472">Membrane</keyword>
<keyword id="KW-1185">Reference proteome</keyword>
<keyword id="KW-0732">Signal</keyword>
<keyword id="KW-0812">Transmembrane</keyword>
<keyword id="KW-1133">Transmembrane helix</keyword>
<dbReference type="EMBL" id="AAFI02000040">
    <property type="protein sequence ID" value="EAL66816.1"/>
    <property type="molecule type" value="Genomic_DNA"/>
</dbReference>
<dbReference type="RefSeq" id="XP_640780.1">
    <property type="nucleotide sequence ID" value="XM_635688.1"/>
</dbReference>
<dbReference type="SMR" id="Q54UJ6"/>
<dbReference type="FunCoup" id="Q54UJ6">
    <property type="interactions" value="2"/>
</dbReference>
<dbReference type="PaxDb" id="44689-DDB0203968"/>
<dbReference type="EnsemblProtists" id="EAL66816">
    <property type="protein sequence ID" value="EAL66816"/>
    <property type="gene ID" value="DDB_G0281039"/>
</dbReference>
<dbReference type="GeneID" id="8622833"/>
<dbReference type="KEGG" id="ddi:DDB_G0281039"/>
<dbReference type="dictyBase" id="DDB_G0281039"/>
<dbReference type="VEuPathDB" id="AmoebaDB:DDB_G0281039"/>
<dbReference type="HOGENOM" id="CLU_738572_0_0_1"/>
<dbReference type="InParanoid" id="Q54UJ6"/>
<dbReference type="Reactome" id="R-DDI-3214858">
    <property type="pathway name" value="RMTs methylate histone arginines"/>
</dbReference>
<dbReference type="PRO" id="PR:Q54UJ6"/>
<dbReference type="Proteomes" id="UP000002195">
    <property type="component" value="Chromosome 3"/>
</dbReference>
<dbReference type="GO" id="GO:0016020">
    <property type="term" value="C:membrane"/>
    <property type="evidence" value="ECO:0007669"/>
    <property type="project" value="UniProtKB-SubCell"/>
</dbReference>
<dbReference type="GO" id="GO:0016514">
    <property type="term" value="C:SWI/SNF complex"/>
    <property type="evidence" value="ECO:0000318"/>
    <property type="project" value="GO_Central"/>
</dbReference>
<dbReference type="GO" id="GO:0016922">
    <property type="term" value="F:nuclear receptor binding"/>
    <property type="evidence" value="ECO:0000318"/>
    <property type="project" value="GO_Central"/>
</dbReference>
<dbReference type="GO" id="GO:0045892">
    <property type="term" value="P:negative regulation of DNA-templated transcription"/>
    <property type="evidence" value="ECO:0000318"/>
    <property type="project" value="GO_Central"/>
</dbReference>
<dbReference type="PANTHER" id="PTHR46232">
    <property type="entry name" value="SMARCE1 REGULATOR OF CHROMATIN"/>
    <property type="match status" value="1"/>
</dbReference>
<dbReference type="PANTHER" id="PTHR46232:SF1">
    <property type="entry name" value="SWI_SNF-RELATED MATRIX-ASSOCIATED ACTIN-DEPENDENT REGULATOR OF CHROMATIN SUBFAMILY E MEMBER 1"/>
    <property type="match status" value="1"/>
</dbReference>
<reference key="1">
    <citation type="journal article" date="2005" name="Nature">
        <title>The genome of the social amoeba Dictyostelium discoideum.</title>
        <authorList>
            <person name="Eichinger L."/>
            <person name="Pachebat J.A."/>
            <person name="Gloeckner G."/>
            <person name="Rajandream M.A."/>
            <person name="Sucgang R."/>
            <person name="Berriman M."/>
            <person name="Song J."/>
            <person name="Olsen R."/>
            <person name="Szafranski K."/>
            <person name="Xu Q."/>
            <person name="Tunggal B."/>
            <person name="Kummerfeld S."/>
            <person name="Madera M."/>
            <person name="Konfortov B.A."/>
            <person name="Rivero F."/>
            <person name="Bankier A.T."/>
            <person name="Lehmann R."/>
            <person name="Hamlin N."/>
            <person name="Davies R."/>
            <person name="Gaudet P."/>
            <person name="Fey P."/>
            <person name="Pilcher K."/>
            <person name="Chen G."/>
            <person name="Saunders D."/>
            <person name="Sodergren E.J."/>
            <person name="Davis P."/>
            <person name="Kerhornou A."/>
            <person name="Nie X."/>
            <person name="Hall N."/>
            <person name="Anjard C."/>
            <person name="Hemphill L."/>
            <person name="Bason N."/>
            <person name="Farbrother P."/>
            <person name="Desany B."/>
            <person name="Just E."/>
            <person name="Morio T."/>
            <person name="Rost R."/>
            <person name="Churcher C.M."/>
            <person name="Cooper J."/>
            <person name="Haydock S."/>
            <person name="van Driessche N."/>
            <person name="Cronin A."/>
            <person name="Goodhead I."/>
            <person name="Muzny D.M."/>
            <person name="Mourier T."/>
            <person name="Pain A."/>
            <person name="Lu M."/>
            <person name="Harper D."/>
            <person name="Lindsay R."/>
            <person name="Hauser H."/>
            <person name="James K.D."/>
            <person name="Quiles M."/>
            <person name="Madan Babu M."/>
            <person name="Saito T."/>
            <person name="Buchrieser C."/>
            <person name="Wardroper A."/>
            <person name="Felder M."/>
            <person name="Thangavelu M."/>
            <person name="Johnson D."/>
            <person name="Knights A."/>
            <person name="Loulseged H."/>
            <person name="Mungall K.L."/>
            <person name="Oliver K."/>
            <person name="Price C."/>
            <person name="Quail M.A."/>
            <person name="Urushihara H."/>
            <person name="Hernandez J."/>
            <person name="Rabbinowitsch E."/>
            <person name="Steffen D."/>
            <person name="Sanders M."/>
            <person name="Ma J."/>
            <person name="Kohara Y."/>
            <person name="Sharp S."/>
            <person name="Simmonds M.N."/>
            <person name="Spiegler S."/>
            <person name="Tivey A."/>
            <person name="Sugano S."/>
            <person name="White B."/>
            <person name="Walker D."/>
            <person name="Woodward J.R."/>
            <person name="Winckler T."/>
            <person name="Tanaka Y."/>
            <person name="Shaulsky G."/>
            <person name="Schleicher M."/>
            <person name="Weinstock G.M."/>
            <person name="Rosenthal A."/>
            <person name="Cox E.C."/>
            <person name="Chisholm R.L."/>
            <person name="Gibbs R.A."/>
            <person name="Loomis W.F."/>
            <person name="Platzer M."/>
            <person name="Kay R.R."/>
            <person name="Williams J.G."/>
            <person name="Dear P.H."/>
            <person name="Noegel A.A."/>
            <person name="Barrell B.G."/>
            <person name="Kuspa A."/>
        </authorList>
    </citation>
    <scope>NUCLEOTIDE SEQUENCE [LARGE SCALE GENOMIC DNA]</scope>
    <source>
        <strain>AX4</strain>
    </source>
</reference>
<sequence>MKNKLFIILIIFIILKIVICQNTTPSKLIPQQQQKQKQQQTQPHHHHHHHQQHQQHQQQHQPNQQIKQQQQPQQQQLQQQQKQLEQQQQQQKIQQQQQPQQQLLQQQQHFPNSQNVIKTPPHHTQQRVPHHHGPNGAPHHHGPNGAPHHHGPNGAPHYHSPNAAPHSGHNTQGHVQTNHVNNINKNNINNNNNNNNNNNNNNNNNNNNNINDNKNIRNNIPSPATKDPNPFINNKPKVNSNTPQPFPHPPHNHNLVNGGRPVIHKQIPPHHHIPMGGGNIQSNQHFQGFQPSQVFTGSQPSSNSASPILFNSENPFYKEEYYKHPEKQVERKITPIMVLYILLASTMVIQLFIMVFKQVKHIREINAKTTMESLL</sequence>
<organism>
    <name type="scientific">Dictyostelium discoideum</name>
    <name type="common">Social amoeba</name>
    <dbReference type="NCBI Taxonomy" id="44689"/>
    <lineage>
        <taxon>Eukaryota</taxon>
        <taxon>Amoebozoa</taxon>
        <taxon>Evosea</taxon>
        <taxon>Eumycetozoa</taxon>
        <taxon>Dictyostelia</taxon>
        <taxon>Dictyosteliales</taxon>
        <taxon>Dictyosteliaceae</taxon>
        <taxon>Dictyostelium</taxon>
    </lineage>
</organism>
<accession>Q54UJ6</accession>
<proteinExistence type="inferred from homology"/>
<protein>
    <recommendedName>
        <fullName>Uncharacterized transmembrane protein DDB_G0281039</fullName>
    </recommendedName>
</protein>